<organismHost>
    <name type="scientific">Homo sapiens</name>
    <name type="common">Human</name>
    <dbReference type="NCBI Taxonomy" id="9606"/>
</organismHost>
<protein>
    <recommendedName>
        <fullName>Hemagglutinin</fullName>
    </recommendedName>
    <component>
        <recommendedName>
            <fullName>Hemagglutinin HA1 chain</fullName>
        </recommendedName>
    </component>
</protein>
<proteinExistence type="inferred from homology"/>
<keyword id="KW-1015">Disulfide bond</keyword>
<keyword id="KW-1170">Fusion of virus membrane with host endosomal membrane</keyword>
<keyword id="KW-1168">Fusion of virus membrane with host membrane</keyword>
<keyword id="KW-0325">Glycoprotein</keyword>
<keyword id="KW-0348">Hemagglutinin</keyword>
<keyword id="KW-1032">Host cell membrane</keyword>
<keyword id="KW-1043">Host membrane</keyword>
<keyword id="KW-0945">Host-virus interaction</keyword>
<keyword id="KW-0449">Lipoprotein</keyword>
<keyword id="KW-0472">Membrane</keyword>
<keyword id="KW-0564">Palmitate</keyword>
<keyword id="KW-0812">Transmembrane</keyword>
<keyword id="KW-1161">Viral attachment to host cell</keyword>
<keyword id="KW-0261">Viral envelope protein</keyword>
<keyword id="KW-1162">Viral penetration into host cytoplasm</keyword>
<keyword id="KW-0946">Virion</keyword>
<keyword id="KW-1160">Virus entry into host cell</keyword>
<comment type="function">
    <text>Binds to sialic acid-containing receptors on the cell surface, bringing about the attachment of the virus particle to the cell. Plays a major role in the determination of host range restriction and virulence. Class I viral fusion protein. Responsible for penetration of the virus into the cell cytoplasm by mediating the fusion of the membrane of the endocytosed virus particle with the endosomal membrane. Low pH in endosomes induce an irreversible conformational change in HA2, releasing the fusion hydrophobic peptide. Several trimers are required to form a competent fusion pore.</text>
</comment>
<comment type="subunit">
    <text>Homotrimer of disulfide-linked HA1-HA2.</text>
</comment>
<comment type="subcellular location">
    <subcellularLocation>
        <location evidence="3">Virion membrane</location>
        <topology evidence="3">Single-pass type I membrane protein</topology>
    </subcellularLocation>
    <subcellularLocation>
        <location>Host apical cell membrane</location>
        <topology>Single-pass type I membrane protein</topology>
    </subcellularLocation>
    <text>Targeted to the apical plasma membrane in epithelial polarized cells through a signal present in the transmembrane domain. Associated with glycosphingolipid- and cholesterol-enriched detergent-resistant lipid rafts.</text>
</comment>
<comment type="PTM">
    <text evidence="1">In natural infection, inactive HA is matured into HA1 and HA2 outside the cell by one or more trypsin-like, arginine-specific endoprotease secreted by the bronchial epithelial cells. One identified protease that may be involved in this process is secreted in lungs by club cells (By similarity).</text>
</comment>
<comment type="PTM">
    <text evidence="1">Palmitoylated.</text>
</comment>
<comment type="miscellaneous">
    <text>Major glycoprotein, comprises over 80% of the envelope proteins present in virus particle.</text>
</comment>
<comment type="miscellaneous">
    <text>The extent of infection into host organism is determined by HA. Influenza viruses bud from the apical surface of polarized epithelial cells (e.g. bronchial epithelial cells) into lumen of lungs and are therefore usually pneumotropic. The reason is that HA is cleaved by tryptase clara which is restricted to lungs. However, HAs of H5 and H7 pantropic avian viruses subtypes can be cleaved by furin and subtilisin-type enzymes, allowing the virus to grow in other organs than lungs.</text>
</comment>
<comment type="miscellaneous">
    <text>The influenza B genome consist of 8 RNA segments. Genetic variation of hemagglutinin and/or neuraminidase genes results in the emergence of new influenza strains. The mechanism of variation can be the result of point mutations or the result of genetic reassortment between segments of two different strains.</text>
</comment>
<comment type="similarity">
    <text evidence="3">Belongs to the influenza viruses hemagglutinin family.</text>
</comment>
<organism>
    <name type="scientific">Influenza B virus (strain B/Fukuoka/80/1981)</name>
    <dbReference type="NCBI Taxonomy" id="11528"/>
    <lineage>
        <taxon>Viruses</taxon>
        <taxon>Riboviria</taxon>
        <taxon>Orthornavirae</taxon>
        <taxon>Negarnaviricota</taxon>
        <taxon>Polyploviricotina</taxon>
        <taxon>Insthoviricetes</taxon>
        <taxon>Articulavirales</taxon>
        <taxon>Orthomyxoviridae</taxon>
        <taxon>Betainfluenzavirus</taxon>
        <taxon>Betainfluenzavirus influenzae</taxon>
        <taxon>Influenza B virus</taxon>
    </lineage>
</organism>
<accession>P18877</accession>
<gene>
    <name type="primary">HA</name>
</gene>
<name>HEMA_INBFU</name>
<dbReference type="EMBL" id="M36106">
    <property type="protein sequence ID" value="AAA43691.1"/>
    <property type="molecule type" value="Genomic_RNA"/>
</dbReference>
<dbReference type="SMR" id="P18877"/>
<dbReference type="GlyCosmos" id="P18877">
    <property type="glycosylation" value="7 sites, No reported glycans"/>
</dbReference>
<dbReference type="GO" id="GO:0020002">
    <property type="term" value="C:host cell plasma membrane"/>
    <property type="evidence" value="ECO:0007669"/>
    <property type="project" value="UniProtKB-SubCell"/>
</dbReference>
<dbReference type="GO" id="GO:0016020">
    <property type="term" value="C:membrane"/>
    <property type="evidence" value="ECO:0007669"/>
    <property type="project" value="UniProtKB-KW"/>
</dbReference>
<dbReference type="GO" id="GO:0019031">
    <property type="term" value="C:viral envelope"/>
    <property type="evidence" value="ECO:0007669"/>
    <property type="project" value="UniProtKB-KW"/>
</dbReference>
<dbReference type="GO" id="GO:0055036">
    <property type="term" value="C:virion membrane"/>
    <property type="evidence" value="ECO:0007669"/>
    <property type="project" value="UniProtKB-SubCell"/>
</dbReference>
<dbReference type="GO" id="GO:0046789">
    <property type="term" value="F:host cell surface receptor binding"/>
    <property type="evidence" value="ECO:0007669"/>
    <property type="project" value="InterPro"/>
</dbReference>
<dbReference type="GO" id="GO:0039654">
    <property type="term" value="P:fusion of virus membrane with host endosome membrane"/>
    <property type="evidence" value="ECO:0007669"/>
    <property type="project" value="UniProtKB-KW"/>
</dbReference>
<dbReference type="GO" id="GO:0019064">
    <property type="term" value="P:fusion of virus membrane with host plasma membrane"/>
    <property type="evidence" value="ECO:0007669"/>
    <property type="project" value="InterPro"/>
</dbReference>
<dbReference type="GO" id="GO:0046718">
    <property type="term" value="P:symbiont entry into host cell"/>
    <property type="evidence" value="ECO:0007669"/>
    <property type="project" value="UniProtKB-KW"/>
</dbReference>
<dbReference type="GO" id="GO:0019062">
    <property type="term" value="P:virion attachment to host cell"/>
    <property type="evidence" value="ECO:0007669"/>
    <property type="project" value="UniProtKB-KW"/>
</dbReference>
<dbReference type="Gene3D" id="3.90.209.20">
    <property type="match status" value="1"/>
</dbReference>
<dbReference type="Gene3D" id="2.10.77.10">
    <property type="entry name" value="Hemagglutinin Chain A, Domain 2"/>
    <property type="match status" value="1"/>
</dbReference>
<dbReference type="InterPro" id="IPR008980">
    <property type="entry name" value="Capsid_hemagglutn"/>
</dbReference>
<dbReference type="InterPro" id="IPR013828">
    <property type="entry name" value="Hemagglutn_HA1_a/b_dom_sf"/>
</dbReference>
<dbReference type="InterPro" id="IPR001364">
    <property type="entry name" value="Hemagglutn_influenz_A/B"/>
</dbReference>
<dbReference type="Pfam" id="PF00509">
    <property type="entry name" value="Hemagglutinin"/>
    <property type="match status" value="1"/>
</dbReference>
<dbReference type="SUPFAM" id="SSF49818">
    <property type="entry name" value="Viral protein domain"/>
    <property type="match status" value="1"/>
</dbReference>
<evidence type="ECO:0000250" key="1"/>
<evidence type="ECO:0000255" key="2"/>
<evidence type="ECO:0000305" key="3"/>
<reference key="1">
    <citation type="journal article" date="1990" name="J. Virol.">
        <title>Evolutionary pattern of the hemagglutinin gene of influenza B viruses isolated in Japan: cocirculating lineages in the same epidemic season.</title>
        <authorList>
            <person name="Kanegae Y."/>
            <person name="Sugita S."/>
            <person name="Endo A."/>
            <person name="Ishida M."/>
            <person name="Senya S."/>
            <person name="Osako K."/>
            <person name="Nerome K."/>
            <person name="Oya A."/>
        </authorList>
    </citation>
    <scope>NUCLEOTIDE SEQUENCE [GENOMIC RNA]</scope>
</reference>
<feature type="chain" id="PRO_0000039102" description="Hemagglutinin HA1 chain">
    <location>
        <begin position="1"/>
        <end position="345"/>
    </location>
</feature>
<feature type="glycosylation site" description="N-linked (GlcNAc...) asparagine; by host" evidence="2">
    <location>
        <position position="25"/>
    </location>
</feature>
<feature type="glycosylation site" description="N-linked (GlcNAc...) asparagine; by host" evidence="2">
    <location>
        <position position="59"/>
    </location>
</feature>
<feature type="glycosylation site" description="N-linked (GlcNAc...) asparagine; by host" evidence="2">
    <location>
        <position position="145"/>
    </location>
</feature>
<feature type="glycosylation site" description="N-linked (GlcNAc...) asparagine; by host" evidence="2">
    <location>
        <position position="164"/>
    </location>
</feature>
<feature type="glycosylation site" description="N-linked (GlcNAc...) asparagine; by host" evidence="2">
    <location>
        <position position="231"/>
    </location>
</feature>
<feature type="glycosylation site" description="N-linked (GlcNAc...) asparagine; by host" evidence="2">
    <location>
        <position position="302"/>
    </location>
</feature>
<feature type="glycosylation site" description="N-linked (GlcNAc...) asparagine; by host" evidence="2">
    <location>
        <position position="331"/>
    </location>
</feature>
<feature type="non-terminal residue">
    <location>
        <position position="345"/>
    </location>
</feature>
<sequence length="345" mass="37297">DLICTGITSSNSPHVVKTATQGEVNVTGVIPLTTTPTKSHFANLKGTKTRGKLCPNCLNCTDLDVALGRPKCMGTIPSAKASILHEVKPVTSGCFPIMHDRTKIRQLPNLLRGYENIRLSTRNVINAEWAPGGPYKIGTSGSCPNVTNGNGFFATMAWAVPKDNKTATDPLTVEVPYICTKGEDQITVWGFHSDNEAQMVKLYGDSKPQKFTSSANGVTTHYVSQIGGFPNQTEDGGIPQSGRIVVDYMVQKPGKTGTIVYQRGVLLPQKVWCASGRSKVIKGSLPLIGEADCLHEKYGGLNKSKPYYTGEHAKAIGNCPIWVKTPLKLANGTKYRPPAKLLKER</sequence>